<sequence>METQGKVITCKAAVAWGAGEPLVMEDVKVDPPQRLEVRIRILFTSICHTDLSAWKGENEAQRAYPRILGHEAAGIVESVGEGVEEMMAGDHVLPIFTGECGDCRVCKRDGANLCERFRVDPMKKVMVTDGKTRFFTSKDNKPIYHFLNTSTFSEYTVIDSACVLKVDPLFPLEKISLLSCGVSTGVGAAWNVADIQPASTVAIFGLGAVGLAVAEGARARGASKIIGIDINPDKFQLGREAGISEFINPKESDKAVHERVMEITEGGVEYSFECAGSIEALREAFLSTNSGVGVTVMLGVHASPQLLPIHPMELFQGRSITASVFGGFKPKTQLPFFITQCLQGLLNLDLFISHQLPFHDINEAMQLLHQGKALRCLLHL</sequence>
<organism>
    <name type="scientific">Arabidopsis thaliana</name>
    <name type="common">Mouse-ear cress</name>
    <dbReference type="NCBI Taxonomy" id="3702"/>
    <lineage>
        <taxon>Eukaryota</taxon>
        <taxon>Viridiplantae</taxon>
        <taxon>Streptophyta</taxon>
        <taxon>Embryophyta</taxon>
        <taxon>Tracheophyta</taxon>
        <taxon>Spermatophyta</taxon>
        <taxon>Magnoliopsida</taxon>
        <taxon>eudicotyledons</taxon>
        <taxon>Gunneridae</taxon>
        <taxon>Pentapetalae</taxon>
        <taxon>rosids</taxon>
        <taxon>malvids</taxon>
        <taxon>Brassicales</taxon>
        <taxon>Brassicaceae</taxon>
        <taxon>Camelineae</taxon>
        <taxon>Arabidopsis</taxon>
    </lineage>
</organism>
<name>ADHL4_ARATH</name>
<feature type="chain" id="PRO_0000299186" description="Alcohol dehydrogenase-like 4">
    <location>
        <begin position="1"/>
        <end position="380"/>
    </location>
</feature>
<feature type="binding site" evidence="2">
    <location>
        <position position="47"/>
    </location>
    <ligand>
        <name>Zn(2+)</name>
        <dbReference type="ChEBI" id="CHEBI:29105"/>
        <label>1</label>
        <note>catalytic</note>
    </ligand>
</feature>
<feature type="binding site" evidence="2">
    <location>
        <position position="49"/>
    </location>
    <ligand>
        <name>an alcohol</name>
        <dbReference type="ChEBI" id="CHEBI:30879"/>
    </ligand>
</feature>
<feature type="binding site" evidence="2">
    <location>
        <position position="49"/>
    </location>
    <ligand>
        <name>NAD(+)</name>
        <dbReference type="ChEBI" id="CHEBI:57540"/>
    </ligand>
</feature>
<feature type="binding site" evidence="2">
    <location>
        <position position="49"/>
    </location>
    <ligand>
        <name>Zn(2+)</name>
        <dbReference type="ChEBI" id="CHEBI:29105"/>
        <label>1</label>
        <note>catalytic</note>
    </ligand>
</feature>
<feature type="binding site" evidence="1">
    <location>
        <position position="70"/>
    </location>
    <ligand>
        <name>an alcohol</name>
        <dbReference type="ChEBI" id="CHEBI:30879"/>
    </ligand>
</feature>
<feature type="binding site" evidence="2">
    <location>
        <position position="70"/>
    </location>
    <ligand>
        <name>Zn(2+)</name>
        <dbReference type="ChEBI" id="CHEBI:29105"/>
        <label>1</label>
        <note>catalytic</note>
    </ligand>
</feature>
<feature type="binding site" evidence="2">
    <location>
        <position position="100"/>
    </location>
    <ligand>
        <name>Zn(2+)</name>
        <dbReference type="ChEBI" id="CHEBI:29105"/>
        <label>2</label>
    </ligand>
</feature>
<feature type="binding site" evidence="2">
    <location>
        <position position="103"/>
    </location>
    <ligand>
        <name>Zn(2+)</name>
        <dbReference type="ChEBI" id="CHEBI:29105"/>
        <label>2</label>
    </ligand>
</feature>
<feature type="binding site" evidence="2">
    <location>
        <position position="106"/>
    </location>
    <ligand>
        <name>Zn(2+)</name>
        <dbReference type="ChEBI" id="CHEBI:29105"/>
        <label>2</label>
    </ligand>
</feature>
<feature type="binding site" evidence="2">
    <location>
        <position position="114"/>
    </location>
    <ligand>
        <name>Zn(2+)</name>
        <dbReference type="ChEBI" id="CHEBI:29105"/>
        <label>2</label>
    </ligand>
</feature>
<feature type="binding site" evidence="2">
    <location>
        <position position="180"/>
    </location>
    <ligand>
        <name>Zn(2+)</name>
        <dbReference type="ChEBI" id="CHEBI:29105"/>
        <label>1</label>
        <note>catalytic</note>
    </ligand>
</feature>
<feature type="binding site" evidence="2">
    <location>
        <begin position="205"/>
        <end position="210"/>
    </location>
    <ligand>
        <name>NAD(+)</name>
        <dbReference type="ChEBI" id="CHEBI:57540"/>
    </ligand>
</feature>
<feature type="binding site" evidence="2">
    <location>
        <position position="229"/>
    </location>
    <ligand>
        <name>NAD(+)</name>
        <dbReference type="ChEBI" id="CHEBI:57540"/>
    </ligand>
</feature>
<feature type="binding site" evidence="2">
    <location>
        <position position="234"/>
    </location>
    <ligand>
        <name>NAD(+)</name>
        <dbReference type="ChEBI" id="CHEBI:57540"/>
    </ligand>
</feature>
<feature type="binding site" evidence="1">
    <location>
        <begin position="298"/>
        <end position="300"/>
    </location>
    <ligand>
        <name>NAD(+)</name>
        <dbReference type="ChEBI" id="CHEBI:57540"/>
    </ligand>
</feature>
<feature type="binding site" evidence="2">
    <location>
        <position position="325"/>
    </location>
    <ligand>
        <name>NAD(+)</name>
        <dbReference type="ChEBI" id="CHEBI:57540"/>
    </ligand>
</feature>
<feature type="binding site" evidence="2">
    <location>
        <position position="375"/>
    </location>
    <ligand>
        <name>NAD(+)</name>
        <dbReference type="ChEBI" id="CHEBI:57540"/>
    </ligand>
</feature>
<evidence type="ECO:0000250" key="1">
    <source>
        <dbReference type="UniProtKB" id="P00327"/>
    </source>
</evidence>
<evidence type="ECO:0000250" key="2">
    <source>
        <dbReference type="UniProtKB" id="P06525"/>
    </source>
</evidence>
<evidence type="ECO:0000305" key="3"/>
<reference key="1">
    <citation type="journal article" date="2000" name="Nature">
        <title>Sequence and analysis of chromosome 1 of the plant Arabidopsis thaliana.</title>
        <authorList>
            <person name="Theologis A."/>
            <person name="Ecker J.R."/>
            <person name="Palm C.J."/>
            <person name="Federspiel N.A."/>
            <person name="Kaul S."/>
            <person name="White O."/>
            <person name="Alonso J."/>
            <person name="Altafi H."/>
            <person name="Araujo R."/>
            <person name="Bowman C.L."/>
            <person name="Brooks S.Y."/>
            <person name="Buehler E."/>
            <person name="Chan A."/>
            <person name="Chao Q."/>
            <person name="Chen H."/>
            <person name="Cheuk R.F."/>
            <person name="Chin C.W."/>
            <person name="Chung M.K."/>
            <person name="Conn L."/>
            <person name="Conway A.B."/>
            <person name="Conway A.R."/>
            <person name="Creasy T.H."/>
            <person name="Dewar K."/>
            <person name="Dunn P."/>
            <person name="Etgu P."/>
            <person name="Feldblyum T.V."/>
            <person name="Feng J.-D."/>
            <person name="Fong B."/>
            <person name="Fujii C.Y."/>
            <person name="Gill J.E."/>
            <person name="Goldsmith A.D."/>
            <person name="Haas B."/>
            <person name="Hansen N.F."/>
            <person name="Hughes B."/>
            <person name="Huizar L."/>
            <person name="Hunter J.L."/>
            <person name="Jenkins J."/>
            <person name="Johnson-Hopson C."/>
            <person name="Khan S."/>
            <person name="Khaykin E."/>
            <person name="Kim C.J."/>
            <person name="Koo H.L."/>
            <person name="Kremenetskaia I."/>
            <person name="Kurtz D.B."/>
            <person name="Kwan A."/>
            <person name="Lam B."/>
            <person name="Langin-Hooper S."/>
            <person name="Lee A."/>
            <person name="Lee J.M."/>
            <person name="Lenz C.A."/>
            <person name="Li J.H."/>
            <person name="Li Y.-P."/>
            <person name="Lin X."/>
            <person name="Liu S.X."/>
            <person name="Liu Z.A."/>
            <person name="Luros J.S."/>
            <person name="Maiti R."/>
            <person name="Marziali A."/>
            <person name="Militscher J."/>
            <person name="Miranda M."/>
            <person name="Nguyen M."/>
            <person name="Nierman W.C."/>
            <person name="Osborne B.I."/>
            <person name="Pai G."/>
            <person name="Peterson J."/>
            <person name="Pham P.K."/>
            <person name="Rizzo M."/>
            <person name="Rooney T."/>
            <person name="Rowley D."/>
            <person name="Sakano H."/>
            <person name="Salzberg S.L."/>
            <person name="Schwartz J.R."/>
            <person name="Shinn P."/>
            <person name="Southwick A.M."/>
            <person name="Sun H."/>
            <person name="Tallon L.J."/>
            <person name="Tambunga G."/>
            <person name="Toriumi M.J."/>
            <person name="Town C.D."/>
            <person name="Utterback T."/>
            <person name="Van Aken S."/>
            <person name="Vaysberg M."/>
            <person name="Vysotskaia V.S."/>
            <person name="Walker M."/>
            <person name="Wu D."/>
            <person name="Yu G."/>
            <person name="Fraser C.M."/>
            <person name="Venter J.C."/>
            <person name="Davis R.W."/>
        </authorList>
    </citation>
    <scope>NUCLEOTIDE SEQUENCE [LARGE SCALE GENOMIC DNA]</scope>
    <source>
        <strain>cv. Columbia</strain>
    </source>
</reference>
<reference key="2">
    <citation type="journal article" date="2017" name="Plant J.">
        <title>Araport11: a complete reannotation of the Arabidopsis thaliana reference genome.</title>
        <authorList>
            <person name="Cheng C.Y."/>
            <person name="Krishnakumar V."/>
            <person name="Chan A.P."/>
            <person name="Thibaud-Nissen F."/>
            <person name="Schobel S."/>
            <person name="Town C.D."/>
        </authorList>
    </citation>
    <scope>GENOME REANNOTATION</scope>
    <source>
        <strain>cv. Columbia</strain>
    </source>
</reference>
<reference key="3">
    <citation type="journal article" date="2003" name="Science">
        <title>Empirical analysis of transcriptional activity in the Arabidopsis genome.</title>
        <authorList>
            <person name="Yamada K."/>
            <person name="Lim J."/>
            <person name="Dale J.M."/>
            <person name="Chen H."/>
            <person name="Shinn P."/>
            <person name="Palm C.J."/>
            <person name="Southwick A.M."/>
            <person name="Wu H.C."/>
            <person name="Kim C.J."/>
            <person name="Nguyen M."/>
            <person name="Pham P.K."/>
            <person name="Cheuk R.F."/>
            <person name="Karlin-Newmann G."/>
            <person name="Liu S.X."/>
            <person name="Lam B."/>
            <person name="Sakano H."/>
            <person name="Wu T."/>
            <person name="Yu G."/>
            <person name="Miranda M."/>
            <person name="Quach H.L."/>
            <person name="Tripp M."/>
            <person name="Chang C.H."/>
            <person name="Lee J.M."/>
            <person name="Toriumi M.J."/>
            <person name="Chan M.M."/>
            <person name="Tang C.C."/>
            <person name="Onodera C.S."/>
            <person name="Deng J.M."/>
            <person name="Akiyama K."/>
            <person name="Ansari Y."/>
            <person name="Arakawa T."/>
            <person name="Banh J."/>
            <person name="Banno F."/>
            <person name="Bowser L."/>
            <person name="Brooks S.Y."/>
            <person name="Carninci P."/>
            <person name="Chao Q."/>
            <person name="Choy N."/>
            <person name="Enju A."/>
            <person name="Goldsmith A.D."/>
            <person name="Gurjal M."/>
            <person name="Hansen N.F."/>
            <person name="Hayashizaki Y."/>
            <person name="Johnson-Hopson C."/>
            <person name="Hsuan V.W."/>
            <person name="Iida K."/>
            <person name="Karnes M."/>
            <person name="Khan S."/>
            <person name="Koesema E."/>
            <person name="Ishida J."/>
            <person name="Jiang P.X."/>
            <person name="Jones T."/>
            <person name="Kawai J."/>
            <person name="Kamiya A."/>
            <person name="Meyers C."/>
            <person name="Nakajima M."/>
            <person name="Narusaka M."/>
            <person name="Seki M."/>
            <person name="Sakurai T."/>
            <person name="Satou M."/>
            <person name="Tamse R."/>
            <person name="Vaysberg M."/>
            <person name="Wallender E.K."/>
            <person name="Wong C."/>
            <person name="Yamamura Y."/>
            <person name="Yuan S."/>
            <person name="Shinozaki K."/>
            <person name="Davis R.W."/>
            <person name="Theologis A."/>
            <person name="Ecker J.R."/>
        </authorList>
    </citation>
    <scope>NUCLEOTIDE SEQUENCE [LARGE SCALE MRNA]</scope>
    <source>
        <strain>cv. Columbia</strain>
    </source>
</reference>
<comment type="catalytic activity">
    <reaction evidence="2">
        <text>a primary alcohol + NAD(+) = an aldehyde + NADH + H(+)</text>
        <dbReference type="Rhea" id="RHEA:10736"/>
        <dbReference type="ChEBI" id="CHEBI:15378"/>
        <dbReference type="ChEBI" id="CHEBI:15734"/>
        <dbReference type="ChEBI" id="CHEBI:17478"/>
        <dbReference type="ChEBI" id="CHEBI:57540"/>
        <dbReference type="ChEBI" id="CHEBI:57945"/>
        <dbReference type="EC" id="1.1.1.1"/>
    </reaction>
</comment>
<comment type="catalytic activity">
    <reaction evidence="2">
        <text>a secondary alcohol + NAD(+) = a ketone + NADH + H(+)</text>
        <dbReference type="Rhea" id="RHEA:10740"/>
        <dbReference type="ChEBI" id="CHEBI:15378"/>
        <dbReference type="ChEBI" id="CHEBI:17087"/>
        <dbReference type="ChEBI" id="CHEBI:35681"/>
        <dbReference type="ChEBI" id="CHEBI:57540"/>
        <dbReference type="ChEBI" id="CHEBI:57945"/>
        <dbReference type="EC" id="1.1.1.1"/>
    </reaction>
</comment>
<comment type="cofactor">
    <cofactor evidence="2">
        <name>Zn(2+)</name>
        <dbReference type="ChEBI" id="CHEBI:29105"/>
    </cofactor>
    <text evidence="2">Binds 2 Zn(2+) ions per subunit.</text>
</comment>
<comment type="subunit">
    <text evidence="2">Homodimer.</text>
</comment>
<comment type="subcellular location">
    <subcellularLocation>
        <location evidence="2">Cytoplasm</location>
    </subcellularLocation>
</comment>
<comment type="alternative products">
    <event type="alternative splicing"/>
    <isoform>
        <id>Q8VZ49-1</id>
        <name>1</name>
        <sequence type="displayed"/>
    </isoform>
    <text>A number of isoforms are produced. According to EST sequences.</text>
</comment>
<comment type="similarity">
    <text evidence="3">Belongs to the zinc-containing alcohol dehydrogenase family. Class-III subfamily.</text>
</comment>
<comment type="sequence caution" evidence="3">
    <conflict type="erroneous gene model prediction">
        <sequence resource="EMBL-CDS" id="AAD38247"/>
    </conflict>
</comment>
<proteinExistence type="evidence at transcript level"/>
<dbReference type="EC" id="1.1.1.1" evidence="2"/>
<dbReference type="EMBL" id="AC006193">
    <property type="protein sequence ID" value="AAD38247.1"/>
    <property type="status" value="ALT_SEQ"/>
    <property type="molecule type" value="Genomic_DNA"/>
</dbReference>
<dbReference type="EMBL" id="CP002684">
    <property type="protein sequence ID" value="AEE34276.2"/>
    <property type="molecule type" value="Genomic_DNA"/>
</dbReference>
<dbReference type="EMBL" id="AY065250">
    <property type="protein sequence ID" value="AAL38726.1"/>
    <property type="molecule type" value="mRNA"/>
</dbReference>
<dbReference type="EMBL" id="BT006064">
    <property type="protein sequence ID" value="AAP04049.1"/>
    <property type="molecule type" value="mRNA"/>
</dbReference>
<dbReference type="PIR" id="C96670">
    <property type="entry name" value="C96670"/>
</dbReference>
<dbReference type="RefSeq" id="NP_176652.3">
    <molecule id="Q8VZ49-1"/>
    <property type="nucleotide sequence ID" value="NM_105146.6"/>
</dbReference>
<dbReference type="SMR" id="Q8VZ49"/>
<dbReference type="BioGRID" id="28000">
    <property type="interactions" value="1"/>
</dbReference>
<dbReference type="FunCoup" id="Q8VZ49">
    <property type="interactions" value="203"/>
</dbReference>
<dbReference type="STRING" id="3702.Q8VZ49"/>
<dbReference type="PaxDb" id="3702-AT1G64710.1"/>
<dbReference type="ProteomicsDB" id="244725">
    <molecule id="Q8VZ49-1"/>
</dbReference>
<dbReference type="EnsemblPlants" id="AT1G64710.1">
    <molecule id="Q8VZ49-1"/>
    <property type="protein sequence ID" value="AT1G64710.1"/>
    <property type="gene ID" value="AT1G64710"/>
</dbReference>
<dbReference type="GeneID" id="842779"/>
<dbReference type="Gramene" id="AT1G64710.1">
    <molecule id="Q8VZ49-1"/>
    <property type="protein sequence ID" value="AT1G64710.1"/>
    <property type="gene ID" value="AT1G64710"/>
</dbReference>
<dbReference type="KEGG" id="ath:AT1G64710"/>
<dbReference type="Araport" id="AT1G64710"/>
<dbReference type="TAIR" id="AT1G64710"/>
<dbReference type="eggNOG" id="KOG0022">
    <property type="taxonomic scope" value="Eukaryota"/>
</dbReference>
<dbReference type="HOGENOM" id="CLU_026673_14_0_1"/>
<dbReference type="InParanoid" id="Q8VZ49"/>
<dbReference type="OMA" id="CSPMCMK"/>
<dbReference type="PhylomeDB" id="Q8VZ49"/>
<dbReference type="BioCyc" id="ARA:AT1G64710-MONOMER"/>
<dbReference type="PRO" id="PR:Q8VZ49"/>
<dbReference type="Proteomes" id="UP000006548">
    <property type="component" value="Chromosome 1"/>
</dbReference>
<dbReference type="ExpressionAtlas" id="Q8VZ49">
    <property type="expression patterns" value="baseline and differential"/>
</dbReference>
<dbReference type="GO" id="GO:0005737">
    <property type="term" value="C:cytoplasm"/>
    <property type="evidence" value="ECO:0007669"/>
    <property type="project" value="UniProtKB-SubCell"/>
</dbReference>
<dbReference type="GO" id="GO:0004022">
    <property type="term" value="F:alcohol dehydrogenase (NAD+) activity"/>
    <property type="evidence" value="ECO:0007669"/>
    <property type="project" value="UniProtKB-EC"/>
</dbReference>
<dbReference type="GO" id="GO:0008270">
    <property type="term" value="F:zinc ion binding"/>
    <property type="evidence" value="ECO:0007669"/>
    <property type="project" value="InterPro"/>
</dbReference>
<dbReference type="CDD" id="cd08301">
    <property type="entry name" value="alcohol_DH_plants"/>
    <property type="match status" value="1"/>
</dbReference>
<dbReference type="FunFam" id="3.90.180.10:FF:000007">
    <property type="entry name" value="Alcohol dehydrogenase 6"/>
    <property type="match status" value="1"/>
</dbReference>
<dbReference type="FunFam" id="3.40.50.720:FF:000003">
    <property type="entry name" value="S-(hydroxymethyl)glutathione dehydrogenase"/>
    <property type="match status" value="1"/>
</dbReference>
<dbReference type="Gene3D" id="3.90.180.10">
    <property type="entry name" value="Medium-chain alcohol dehydrogenases, catalytic domain"/>
    <property type="match status" value="1"/>
</dbReference>
<dbReference type="Gene3D" id="3.40.50.720">
    <property type="entry name" value="NAD(P)-binding Rossmann-like Domain"/>
    <property type="match status" value="1"/>
</dbReference>
<dbReference type="InterPro" id="IPR013149">
    <property type="entry name" value="ADH-like_C"/>
</dbReference>
<dbReference type="InterPro" id="IPR013154">
    <property type="entry name" value="ADH-like_N"/>
</dbReference>
<dbReference type="InterPro" id="IPR002328">
    <property type="entry name" value="ADH_Zn_CS"/>
</dbReference>
<dbReference type="InterPro" id="IPR011032">
    <property type="entry name" value="GroES-like_sf"/>
</dbReference>
<dbReference type="InterPro" id="IPR036291">
    <property type="entry name" value="NAD(P)-bd_dom_sf"/>
</dbReference>
<dbReference type="PANTHER" id="PTHR43880">
    <property type="entry name" value="ALCOHOL DEHYDROGENASE"/>
    <property type="match status" value="1"/>
</dbReference>
<dbReference type="PANTHER" id="PTHR43880:SF56">
    <property type="entry name" value="ALCOHOL DEHYDROGENASE-LIKE 4"/>
    <property type="match status" value="1"/>
</dbReference>
<dbReference type="Pfam" id="PF08240">
    <property type="entry name" value="ADH_N"/>
    <property type="match status" value="1"/>
</dbReference>
<dbReference type="Pfam" id="PF00107">
    <property type="entry name" value="ADH_zinc_N"/>
    <property type="match status" value="1"/>
</dbReference>
<dbReference type="SUPFAM" id="SSF50129">
    <property type="entry name" value="GroES-like"/>
    <property type="match status" value="2"/>
</dbReference>
<dbReference type="SUPFAM" id="SSF51735">
    <property type="entry name" value="NAD(P)-binding Rossmann-fold domains"/>
    <property type="match status" value="1"/>
</dbReference>
<dbReference type="PROSITE" id="PS00059">
    <property type="entry name" value="ADH_ZINC"/>
    <property type="match status" value="1"/>
</dbReference>
<gene>
    <name type="ordered locus">At1g64710</name>
    <name type="ORF">F13O11.3</name>
</gene>
<keyword id="KW-0025">Alternative splicing</keyword>
<keyword id="KW-0963">Cytoplasm</keyword>
<keyword id="KW-0479">Metal-binding</keyword>
<keyword id="KW-0520">NAD</keyword>
<keyword id="KW-0560">Oxidoreductase</keyword>
<keyword id="KW-1185">Reference proteome</keyword>
<keyword id="KW-0862">Zinc</keyword>
<accession>Q8VZ49</accession>
<accession>F4I880</accession>
<accession>Q9XIS0</accession>
<protein>
    <recommendedName>
        <fullName>Alcohol dehydrogenase-like 4</fullName>
        <ecNumber evidence="2">1.1.1.1</ecNumber>
    </recommendedName>
</protein>